<gene>
    <name type="primary">Ndufs1</name>
</gene>
<accession>Q91VD9</accession>
<accession>Q3UQ73</accession>
<accession>Q8BM16</accession>
<comment type="function">
    <text evidence="6 7 8">Core subunit of the mitochondrial membrane respiratory chain NADH dehydrogenase (Complex I) which catalyzes electron transfer from NADH through the respiratory chain, using ubiquinone as an electron acceptor (PubMed:27799543, PubMed:32072193, PubMed:38575788). Essential for catalysing the entry and efficient transfer of electrons within complex I (PubMed:27799543). Plays a key role in the assembly and stability of complex I and participates in the association of complex I with ubiquinol-cytochrome reductase complex (Complex III) to form supercomplexes (PubMed:27799543).</text>
</comment>
<comment type="catalytic activity">
    <reaction evidence="6 7">
        <text>a ubiquinone + NADH + 5 H(+)(in) = a ubiquinol + NAD(+) + 4 H(+)(out)</text>
        <dbReference type="Rhea" id="RHEA:29091"/>
        <dbReference type="Rhea" id="RHEA-COMP:9565"/>
        <dbReference type="Rhea" id="RHEA-COMP:9566"/>
        <dbReference type="ChEBI" id="CHEBI:15378"/>
        <dbReference type="ChEBI" id="CHEBI:16389"/>
        <dbReference type="ChEBI" id="CHEBI:17976"/>
        <dbReference type="ChEBI" id="CHEBI:57540"/>
        <dbReference type="ChEBI" id="CHEBI:57945"/>
        <dbReference type="EC" id="7.1.1.2"/>
    </reaction>
</comment>
<comment type="cofactor">
    <cofactor evidence="8">
        <name>[2Fe-2S] cluster</name>
        <dbReference type="ChEBI" id="CHEBI:190135"/>
    </cofactor>
    <text evidence="8">Binds 1 [2Fe-2S] cluster per subunit.</text>
</comment>
<comment type="cofactor">
    <cofactor evidence="8">
        <name>[4Fe-4S] cluster</name>
        <dbReference type="ChEBI" id="CHEBI:49883"/>
    </cofactor>
    <text evidence="8">Binds 2 [4Fe-4S] clusters per subunit.</text>
</comment>
<comment type="subunit">
    <text evidence="1 2 6 7 8">Core subunit of respiratory chain NADH dehydrogenase (Complex I) which is composed of 45 different subunits (PubMed:38575788). This is the largest subunit of complex I and it is a component of the iron-sulfur (IP) fragment of the enzyme (By similarity). Complex I associates with ubiquinol-cytochrome reductase complex (Complex III) to form supercomplexes (PubMed:27799543). In astrocytes, less complex I is assembled into supercomplexes as compared to neurons (PubMed:27799543). Interacts with MDM2 (By similarity). Interacts with AKAP1 (PubMed:32072193).</text>
</comment>
<comment type="subcellular location">
    <subcellularLocation>
        <location evidence="8">Mitochondrion inner membrane</location>
        <topology evidence="8">Peripheral membrane protein</topology>
        <orientation evidence="8">Matrix side</orientation>
    </subcellularLocation>
</comment>
<comment type="tissue specificity">
    <text evidence="6">Brain. More abundant in neurons than in astrocytes (at protein level).</text>
</comment>
<comment type="PTM">
    <text>Acetylation of Lys-84 is observed in liver mitochondria from fasted mice but not from fed mice.</text>
</comment>
<comment type="similarity">
    <text evidence="9">Belongs to the complex I 75 kDa subunit family.</text>
</comment>
<proteinExistence type="evidence at protein level"/>
<sequence>MLRIPIKRALIGLSNSPKGYVRTTGTAASNLIEVFVDGQSVMVEPGTTVLQACEKVGMQIPRFCYHERLSVAGNCRMCLVEIEKAPKVVAACAMPVMKGWNILTNSEKSKKAREGVMEFLLANHPLDCPICDQGGECDLQDQSMMFGSDRSRFLEGKRAVEDKNIGPLVKTIMTRCIQCTRCIRFASEIAGVDDLGTTGRGNDMQVGTYIEKMFMSELSGNVIDICPVGALTSKPYAFTARPWETRKTESIDVMDAVGSNIVVSTRTGEVMRILPRMHEDINEEWISDKTRFAYDGLKRQRLTEPMVRNEKGLLTYTSWEDALSRVAGMLQNFEGNAVAAIAGGLVDAEALVALKDLLNKVDSDNLCTEEIFPTEGAGTDLRSNYLLNTTIAGVEEADVVLLVGTNPRFEAPLFNARIRKSWLHNDLKVALIGSPVDLTYRYDHLGDSPKILQDIASGRHSFCEVLKDAKKPMVVLGSSALQRDDGAAILVAVSNMVQKIRVTTGVAAEWKVMNILHRIASQVAALDLGYKPGVEAIRKNPPKMLFLLGADGGCITRQDLPKDCFIVYQGHHGDVGAPMADVILPGAAYTEKSATYVNTEGRAQQTKVAVTPPGLAREDWKIIRALSEIAGITLPYDTLDQVRNRLEEVSPNLVRYDDIEETNYFQQASELAKLVNQEVLADPLVPPQLTIKDFYMTDSISRASQTMAKCVKAVTEGAQAVEEPSIC</sequence>
<name>NDUS1_MOUSE</name>
<evidence type="ECO:0000250" key="1">
    <source>
        <dbReference type="UniProtKB" id="P15690"/>
    </source>
</evidence>
<evidence type="ECO:0000250" key="2">
    <source>
        <dbReference type="UniProtKB" id="P28331"/>
    </source>
</evidence>
<evidence type="ECO:0000255" key="3">
    <source>
        <dbReference type="PROSITE-ProRule" id="PRU00465"/>
    </source>
</evidence>
<evidence type="ECO:0000255" key="4">
    <source>
        <dbReference type="PROSITE-ProRule" id="PRU01004"/>
    </source>
</evidence>
<evidence type="ECO:0000255" key="5">
    <source>
        <dbReference type="PROSITE-ProRule" id="PRU01184"/>
    </source>
</evidence>
<evidence type="ECO:0000269" key="6">
    <source>
    </source>
</evidence>
<evidence type="ECO:0000269" key="7">
    <source>
    </source>
</evidence>
<evidence type="ECO:0000269" key="8">
    <source>
    </source>
</evidence>
<evidence type="ECO:0000305" key="9"/>
<evidence type="ECO:0007744" key="10">
    <source>
        <dbReference type="PDB" id="8PW5"/>
    </source>
</evidence>
<evidence type="ECO:0007744" key="11">
    <source>
    </source>
</evidence>
<evidence type="ECO:0007744" key="12">
    <source>
    </source>
</evidence>
<evidence type="ECO:0007829" key="13">
    <source>
        <dbReference type="PDB" id="6ZTQ"/>
    </source>
</evidence>
<evidence type="ECO:0007829" key="14">
    <source>
        <dbReference type="PDB" id="7AK5"/>
    </source>
</evidence>
<evidence type="ECO:0007829" key="15">
    <source>
        <dbReference type="PDB" id="8CA3"/>
    </source>
</evidence>
<evidence type="ECO:0007829" key="16">
    <source>
        <dbReference type="PDB" id="8CA4"/>
    </source>
</evidence>
<evidence type="ECO:0007829" key="17">
    <source>
        <dbReference type="PDB" id="8OM1"/>
    </source>
</evidence>
<evidence type="ECO:0007829" key="18">
    <source>
        <dbReference type="PDB" id="8RGP"/>
    </source>
</evidence>
<evidence type="ECO:0007829" key="19">
    <source>
        <dbReference type="PDB" id="8RGR"/>
    </source>
</evidence>
<protein>
    <recommendedName>
        <fullName>NADH-ubiquinone oxidoreductase 75 kDa subunit, mitochondrial</fullName>
        <ecNumber evidence="6 7">7.1.1.2</ecNumber>
    </recommendedName>
    <alternativeName>
        <fullName>Complex I-75kD</fullName>
        <shortName>CI-75kD</shortName>
    </alternativeName>
</protein>
<keyword id="KW-0001">2Fe-2S</keyword>
<keyword id="KW-0002">3D-structure</keyword>
<keyword id="KW-0004">4Fe-4S</keyword>
<keyword id="KW-0007">Acetylation</keyword>
<keyword id="KW-0903">Direct protein sequencing</keyword>
<keyword id="KW-0249">Electron transport</keyword>
<keyword id="KW-0408">Iron</keyword>
<keyword id="KW-0411">Iron-sulfur</keyword>
<keyword id="KW-0472">Membrane</keyword>
<keyword id="KW-0479">Metal-binding</keyword>
<keyword id="KW-0496">Mitochondrion</keyword>
<keyword id="KW-0999">Mitochondrion inner membrane</keyword>
<keyword id="KW-0520">NAD</keyword>
<keyword id="KW-0560">Oxidoreductase</keyword>
<keyword id="KW-0597">Phosphoprotein</keyword>
<keyword id="KW-1185">Reference proteome</keyword>
<keyword id="KW-0679">Respiratory chain</keyword>
<keyword id="KW-0809">Transit peptide</keyword>
<keyword id="KW-1278">Translocase</keyword>
<keyword id="KW-0813">Transport</keyword>
<keyword id="KW-0830">Ubiquinone</keyword>
<organism>
    <name type="scientific">Mus musculus</name>
    <name type="common">Mouse</name>
    <dbReference type="NCBI Taxonomy" id="10090"/>
    <lineage>
        <taxon>Eukaryota</taxon>
        <taxon>Metazoa</taxon>
        <taxon>Chordata</taxon>
        <taxon>Craniata</taxon>
        <taxon>Vertebrata</taxon>
        <taxon>Euteleostomi</taxon>
        <taxon>Mammalia</taxon>
        <taxon>Eutheria</taxon>
        <taxon>Euarchontoglires</taxon>
        <taxon>Glires</taxon>
        <taxon>Rodentia</taxon>
        <taxon>Myomorpha</taxon>
        <taxon>Muroidea</taxon>
        <taxon>Muridae</taxon>
        <taxon>Murinae</taxon>
        <taxon>Mus</taxon>
        <taxon>Mus</taxon>
    </lineage>
</organism>
<reference key="1">
    <citation type="journal article" date="2005" name="Science">
        <title>The transcriptional landscape of the mammalian genome.</title>
        <authorList>
            <person name="Carninci P."/>
            <person name="Kasukawa T."/>
            <person name="Katayama S."/>
            <person name="Gough J."/>
            <person name="Frith M.C."/>
            <person name="Maeda N."/>
            <person name="Oyama R."/>
            <person name="Ravasi T."/>
            <person name="Lenhard B."/>
            <person name="Wells C."/>
            <person name="Kodzius R."/>
            <person name="Shimokawa K."/>
            <person name="Bajic V.B."/>
            <person name="Brenner S.E."/>
            <person name="Batalov S."/>
            <person name="Forrest A.R."/>
            <person name="Zavolan M."/>
            <person name="Davis M.J."/>
            <person name="Wilming L.G."/>
            <person name="Aidinis V."/>
            <person name="Allen J.E."/>
            <person name="Ambesi-Impiombato A."/>
            <person name="Apweiler R."/>
            <person name="Aturaliya R.N."/>
            <person name="Bailey T.L."/>
            <person name="Bansal M."/>
            <person name="Baxter L."/>
            <person name="Beisel K.W."/>
            <person name="Bersano T."/>
            <person name="Bono H."/>
            <person name="Chalk A.M."/>
            <person name="Chiu K.P."/>
            <person name="Choudhary V."/>
            <person name="Christoffels A."/>
            <person name="Clutterbuck D.R."/>
            <person name="Crowe M.L."/>
            <person name="Dalla E."/>
            <person name="Dalrymple B.P."/>
            <person name="de Bono B."/>
            <person name="Della Gatta G."/>
            <person name="di Bernardo D."/>
            <person name="Down T."/>
            <person name="Engstrom P."/>
            <person name="Fagiolini M."/>
            <person name="Faulkner G."/>
            <person name="Fletcher C.F."/>
            <person name="Fukushima T."/>
            <person name="Furuno M."/>
            <person name="Futaki S."/>
            <person name="Gariboldi M."/>
            <person name="Georgii-Hemming P."/>
            <person name="Gingeras T.R."/>
            <person name="Gojobori T."/>
            <person name="Green R.E."/>
            <person name="Gustincich S."/>
            <person name="Harbers M."/>
            <person name="Hayashi Y."/>
            <person name="Hensch T.K."/>
            <person name="Hirokawa N."/>
            <person name="Hill D."/>
            <person name="Huminiecki L."/>
            <person name="Iacono M."/>
            <person name="Ikeo K."/>
            <person name="Iwama A."/>
            <person name="Ishikawa T."/>
            <person name="Jakt M."/>
            <person name="Kanapin A."/>
            <person name="Katoh M."/>
            <person name="Kawasawa Y."/>
            <person name="Kelso J."/>
            <person name="Kitamura H."/>
            <person name="Kitano H."/>
            <person name="Kollias G."/>
            <person name="Krishnan S.P."/>
            <person name="Kruger A."/>
            <person name="Kummerfeld S.K."/>
            <person name="Kurochkin I.V."/>
            <person name="Lareau L.F."/>
            <person name="Lazarevic D."/>
            <person name="Lipovich L."/>
            <person name="Liu J."/>
            <person name="Liuni S."/>
            <person name="McWilliam S."/>
            <person name="Madan Babu M."/>
            <person name="Madera M."/>
            <person name="Marchionni L."/>
            <person name="Matsuda H."/>
            <person name="Matsuzawa S."/>
            <person name="Miki H."/>
            <person name="Mignone F."/>
            <person name="Miyake S."/>
            <person name="Morris K."/>
            <person name="Mottagui-Tabar S."/>
            <person name="Mulder N."/>
            <person name="Nakano N."/>
            <person name="Nakauchi H."/>
            <person name="Ng P."/>
            <person name="Nilsson R."/>
            <person name="Nishiguchi S."/>
            <person name="Nishikawa S."/>
            <person name="Nori F."/>
            <person name="Ohara O."/>
            <person name="Okazaki Y."/>
            <person name="Orlando V."/>
            <person name="Pang K.C."/>
            <person name="Pavan W.J."/>
            <person name="Pavesi G."/>
            <person name="Pesole G."/>
            <person name="Petrovsky N."/>
            <person name="Piazza S."/>
            <person name="Reed J."/>
            <person name="Reid J.F."/>
            <person name="Ring B.Z."/>
            <person name="Ringwald M."/>
            <person name="Rost B."/>
            <person name="Ruan Y."/>
            <person name="Salzberg S.L."/>
            <person name="Sandelin A."/>
            <person name="Schneider C."/>
            <person name="Schoenbach C."/>
            <person name="Sekiguchi K."/>
            <person name="Semple C.A."/>
            <person name="Seno S."/>
            <person name="Sessa L."/>
            <person name="Sheng Y."/>
            <person name="Shibata Y."/>
            <person name="Shimada H."/>
            <person name="Shimada K."/>
            <person name="Silva D."/>
            <person name="Sinclair B."/>
            <person name="Sperling S."/>
            <person name="Stupka E."/>
            <person name="Sugiura K."/>
            <person name="Sultana R."/>
            <person name="Takenaka Y."/>
            <person name="Taki K."/>
            <person name="Tammoja K."/>
            <person name="Tan S.L."/>
            <person name="Tang S."/>
            <person name="Taylor M.S."/>
            <person name="Tegner J."/>
            <person name="Teichmann S.A."/>
            <person name="Ueda H.R."/>
            <person name="van Nimwegen E."/>
            <person name="Verardo R."/>
            <person name="Wei C.L."/>
            <person name="Yagi K."/>
            <person name="Yamanishi H."/>
            <person name="Zabarovsky E."/>
            <person name="Zhu S."/>
            <person name="Zimmer A."/>
            <person name="Hide W."/>
            <person name="Bult C."/>
            <person name="Grimmond S.M."/>
            <person name="Teasdale R.D."/>
            <person name="Liu E.T."/>
            <person name="Brusic V."/>
            <person name="Quackenbush J."/>
            <person name="Wahlestedt C."/>
            <person name="Mattick J.S."/>
            <person name="Hume D.A."/>
            <person name="Kai C."/>
            <person name="Sasaki D."/>
            <person name="Tomaru Y."/>
            <person name="Fukuda S."/>
            <person name="Kanamori-Katayama M."/>
            <person name="Suzuki M."/>
            <person name="Aoki J."/>
            <person name="Arakawa T."/>
            <person name="Iida J."/>
            <person name="Imamura K."/>
            <person name="Itoh M."/>
            <person name="Kato T."/>
            <person name="Kawaji H."/>
            <person name="Kawagashira N."/>
            <person name="Kawashima T."/>
            <person name="Kojima M."/>
            <person name="Kondo S."/>
            <person name="Konno H."/>
            <person name="Nakano K."/>
            <person name="Ninomiya N."/>
            <person name="Nishio T."/>
            <person name="Okada M."/>
            <person name="Plessy C."/>
            <person name="Shibata K."/>
            <person name="Shiraki T."/>
            <person name="Suzuki S."/>
            <person name="Tagami M."/>
            <person name="Waki K."/>
            <person name="Watahiki A."/>
            <person name="Okamura-Oho Y."/>
            <person name="Suzuki H."/>
            <person name="Kawai J."/>
            <person name="Hayashizaki Y."/>
        </authorList>
    </citation>
    <scope>NUCLEOTIDE SEQUENCE [LARGE SCALE MRNA]</scope>
    <source>
        <strain>C57BL/6J</strain>
        <tissue>Embryonic breast</tissue>
        <tissue>Heart</tissue>
        <tissue>Vagina</tissue>
    </source>
</reference>
<reference key="2">
    <citation type="journal article" date="2009" name="PLoS Biol.">
        <title>Lineage-specific biology revealed by a finished genome assembly of the mouse.</title>
        <authorList>
            <person name="Church D.M."/>
            <person name="Goodstadt L."/>
            <person name="Hillier L.W."/>
            <person name="Zody M.C."/>
            <person name="Goldstein S."/>
            <person name="She X."/>
            <person name="Bult C.J."/>
            <person name="Agarwala R."/>
            <person name="Cherry J.L."/>
            <person name="DiCuccio M."/>
            <person name="Hlavina W."/>
            <person name="Kapustin Y."/>
            <person name="Meric P."/>
            <person name="Maglott D."/>
            <person name="Birtle Z."/>
            <person name="Marques A.C."/>
            <person name="Graves T."/>
            <person name="Zhou S."/>
            <person name="Teague B."/>
            <person name="Potamousis K."/>
            <person name="Churas C."/>
            <person name="Place M."/>
            <person name="Herschleb J."/>
            <person name="Runnheim R."/>
            <person name="Forrest D."/>
            <person name="Amos-Landgraf J."/>
            <person name="Schwartz D.C."/>
            <person name="Cheng Z."/>
            <person name="Lindblad-Toh K."/>
            <person name="Eichler E.E."/>
            <person name="Ponting C.P."/>
        </authorList>
    </citation>
    <scope>NUCLEOTIDE SEQUENCE [LARGE SCALE GENOMIC DNA]</scope>
    <source>
        <strain>C57BL/6J</strain>
    </source>
</reference>
<reference key="3">
    <citation type="submission" date="2005-07" db="EMBL/GenBank/DDBJ databases">
        <authorList>
            <person name="Mural R.J."/>
            <person name="Adams M.D."/>
            <person name="Myers E.W."/>
            <person name="Smith H.O."/>
            <person name="Venter J.C."/>
        </authorList>
    </citation>
    <scope>NUCLEOTIDE SEQUENCE [LARGE SCALE GENOMIC DNA]</scope>
</reference>
<reference key="4">
    <citation type="journal article" date="2004" name="Genome Res.">
        <title>The status, quality, and expansion of the NIH full-length cDNA project: the Mammalian Gene Collection (MGC).</title>
        <authorList>
            <consortium name="The MGC Project Team"/>
        </authorList>
    </citation>
    <scope>NUCLEOTIDE SEQUENCE [LARGE SCALE MRNA]</scope>
    <source>
        <tissue>Kidney</tissue>
    </source>
</reference>
<reference key="5">
    <citation type="submission" date="2007-04" db="UniProtKB">
        <authorList>
            <person name="Lubec G."/>
            <person name="Klug S."/>
            <person name="Kang S.U."/>
        </authorList>
    </citation>
    <scope>PROTEIN SEQUENCE OF 77-84; 88-108; 185-212; 247-266; 277-289; 292-299; 312-325; 361-382; 409-417; 421-441; 451-467; 471-483; 502-511; 519-539; 544-557; 608-617; 625-643; 646-655; 674-702 AND 713-727</scope>
    <scope>IDENTIFICATION BY MASS SPECTROMETRY</scope>
    <source>
        <strain>C57BL/6J</strain>
        <tissue>Brain</tissue>
        <tissue>Hippocampus</tissue>
    </source>
</reference>
<reference key="6">
    <citation type="journal article" date="2010" name="Cell">
        <title>A tissue-specific atlas of mouse protein phosphorylation and expression.</title>
        <authorList>
            <person name="Huttlin E.L."/>
            <person name="Jedrychowski M.P."/>
            <person name="Elias J.E."/>
            <person name="Goswami T."/>
            <person name="Rad R."/>
            <person name="Beausoleil S.A."/>
            <person name="Villen J."/>
            <person name="Haas W."/>
            <person name="Sowa M.E."/>
            <person name="Gygi S.P."/>
        </authorList>
    </citation>
    <scope>PHOSPHORYLATION [LARGE SCALE ANALYSIS] AT SER-461</scope>
    <scope>IDENTIFICATION BY MASS SPECTROMETRY [LARGE SCALE ANALYSIS]</scope>
    <source>
        <tissue>Brain</tissue>
        <tissue>Brown adipose tissue</tissue>
        <tissue>Heart</tissue>
        <tissue>Kidney</tissue>
        <tissue>Liver</tissue>
        <tissue>Lung</tissue>
        <tissue>Pancreas</tissue>
        <tissue>Spleen</tissue>
        <tissue>Testis</tissue>
    </source>
</reference>
<reference key="7">
    <citation type="journal article" date="2013" name="Proc. Natl. Acad. Sci. U.S.A.">
        <title>Label-free quantitative proteomics of the lysine acetylome in mitochondria identifies substrates of SIRT3 in metabolic pathways.</title>
        <authorList>
            <person name="Rardin M.J."/>
            <person name="Newman J.C."/>
            <person name="Held J.M."/>
            <person name="Cusack M.P."/>
            <person name="Sorensen D.J."/>
            <person name="Li B."/>
            <person name="Schilling B."/>
            <person name="Mooney S.D."/>
            <person name="Kahn C.R."/>
            <person name="Verdin E."/>
            <person name="Gibson B.W."/>
        </authorList>
    </citation>
    <scope>ACETYLATION [LARGE SCALE ANALYSIS] AT LYS-84; LYS-467; LYS-499 AND LYS-709</scope>
    <scope>IDENTIFICATION BY MASS SPECTROMETRY [LARGE SCALE ANALYSIS]</scope>
    <source>
        <tissue>Liver</tissue>
    </source>
</reference>
<reference key="8">
    <citation type="journal article" date="2016" name="Proc. Natl. Acad. Sci. U.S.A.">
        <title>Complex I assembly into supercomplexes determines differential mitochondrial ROS production in neurons and astrocytes.</title>
        <authorList>
            <person name="Lopez-Fabuel I."/>
            <person name="Le Douce J."/>
            <person name="Logan A."/>
            <person name="James A.M."/>
            <person name="Bonvento G."/>
            <person name="Murphy M.P."/>
            <person name="Almeida A."/>
            <person name="Bolanos J.P."/>
        </authorList>
    </citation>
    <scope>FUNCTION</scope>
    <scope>SUBUNIT</scope>
    <scope>CATALYTIC ACTIVITY</scope>
    <scope>TISSUE SPECIFICITY</scope>
</reference>
<reference key="9">
    <citation type="journal article" date="2020" name="Diabetologia">
        <title>Akap1 deficiency exacerbates diabetic cardiomyopathy in mice by NDUFS1-mediated mitochondrial dysfunction and apoptosis.</title>
        <authorList>
            <person name="Qi B."/>
            <person name="He L."/>
            <person name="Zhao Y."/>
            <person name="Zhang L."/>
            <person name="He Y."/>
            <person name="Li J."/>
            <person name="Li C."/>
            <person name="Zhang B."/>
            <person name="Huang Q."/>
            <person name="Xing J."/>
            <person name="Li F."/>
            <person name="Li Y."/>
            <person name="Ji L."/>
        </authorList>
    </citation>
    <scope>FUNCTION</scope>
    <scope>CATALYTIC ACTIVITY</scope>
    <scope>SUBCELLULAR LOCATION</scope>
    <scope>INTERACTION WITH AKAP1</scope>
</reference>
<reference evidence="10" key="10">
    <citation type="journal article" date="2024" name="Nat. Struct. Mol. Biol.">
        <title>SCAF1 drives the compositional diversity of mammalian respirasomes.</title>
        <authorList>
            <person name="Vercellino I."/>
            <person name="Sazanov L.A."/>
        </authorList>
    </citation>
    <scope>STRUCTURE BY ELECTRON MICROSCOPY (3.60 ANGSTROMS) IN COMPLEX WITH MITOCHONDRIAL RESPIRATORY SUPERCOMPLEX</scope>
    <scope>FUNCTION</scope>
    <scope>SUBCELLULAR LOCATION</scope>
    <scope>SUBUNIT</scope>
</reference>
<feature type="transit peptide" description="Mitochondrion" evidence="1">
    <location>
        <begin position="1"/>
        <end position="23"/>
    </location>
</feature>
<feature type="chain" id="PRO_0000019969" description="NADH-ubiquinone oxidoreductase 75 kDa subunit, mitochondrial">
    <location>
        <begin position="24"/>
        <end position="727"/>
    </location>
</feature>
<feature type="domain" description="2Fe-2S ferredoxin-type" evidence="3">
    <location>
        <begin position="30"/>
        <end position="108"/>
    </location>
</feature>
<feature type="domain" description="4Fe-4S His(Cys)3-ligated-type" evidence="5">
    <location>
        <begin position="108"/>
        <end position="147"/>
    </location>
</feature>
<feature type="domain" description="4Fe-4S Mo/W bis-MGD-type" evidence="4">
    <location>
        <begin position="245"/>
        <end position="301"/>
    </location>
</feature>
<feature type="binding site" evidence="8">
    <location>
        <position position="64"/>
    </location>
    <ligand>
        <name>[2Fe-2S] cluster</name>
        <dbReference type="ChEBI" id="CHEBI:190135"/>
    </ligand>
</feature>
<feature type="binding site" evidence="8">
    <location>
        <position position="75"/>
    </location>
    <ligand>
        <name>[2Fe-2S] cluster</name>
        <dbReference type="ChEBI" id="CHEBI:190135"/>
    </ligand>
</feature>
<feature type="binding site" evidence="8">
    <location>
        <position position="78"/>
    </location>
    <ligand>
        <name>[2Fe-2S] cluster</name>
        <dbReference type="ChEBI" id="CHEBI:190135"/>
    </ligand>
</feature>
<feature type="binding site" evidence="8">
    <location>
        <position position="92"/>
    </location>
    <ligand>
        <name>[2Fe-2S] cluster</name>
        <dbReference type="ChEBI" id="CHEBI:190135"/>
    </ligand>
</feature>
<feature type="binding site" evidence="5 8">
    <location>
        <position position="124"/>
    </location>
    <ligand>
        <name>[4Fe-4S] cluster</name>
        <dbReference type="ChEBI" id="CHEBI:49883"/>
        <label>1</label>
    </ligand>
</feature>
<feature type="binding site" evidence="5 8">
    <location>
        <position position="128"/>
    </location>
    <ligand>
        <name>[4Fe-4S] cluster</name>
        <dbReference type="ChEBI" id="CHEBI:49883"/>
        <label>1</label>
    </ligand>
</feature>
<feature type="binding site" evidence="5 8">
    <location>
        <position position="131"/>
    </location>
    <ligand>
        <name>[4Fe-4S] cluster</name>
        <dbReference type="ChEBI" id="CHEBI:49883"/>
        <label>1</label>
    </ligand>
</feature>
<feature type="binding site" evidence="5 8">
    <location>
        <position position="137"/>
    </location>
    <ligand>
        <name>[4Fe-4S] cluster</name>
        <dbReference type="ChEBI" id="CHEBI:49883"/>
        <label>1</label>
    </ligand>
</feature>
<feature type="binding site" evidence="8">
    <location>
        <position position="176"/>
    </location>
    <ligand>
        <name>[4Fe-4S] cluster</name>
        <dbReference type="ChEBI" id="CHEBI:49883"/>
        <label>2</label>
    </ligand>
</feature>
<feature type="binding site" evidence="8">
    <location>
        <position position="179"/>
    </location>
    <ligand>
        <name>[4Fe-4S] cluster</name>
        <dbReference type="ChEBI" id="CHEBI:49883"/>
        <label>2</label>
    </ligand>
</feature>
<feature type="binding site" evidence="8">
    <location>
        <position position="182"/>
    </location>
    <ligand>
        <name>[4Fe-4S] cluster</name>
        <dbReference type="ChEBI" id="CHEBI:49883"/>
        <label>2</label>
    </ligand>
</feature>
<feature type="binding site" evidence="8">
    <location>
        <position position="226"/>
    </location>
    <ligand>
        <name>[4Fe-4S] cluster</name>
        <dbReference type="ChEBI" id="CHEBI:49883"/>
        <label>2</label>
    </ligand>
</feature>
<feature type="modified residue" description="N6-acetyllysine" evidence="12">
    <location>
        <position position="84"/>
    </location>
</feature>
<feature type="modified residue" description="Phosphoserine" evidence="11">
    <location>
        <position position="461"/>
    </location>
</feature>
<feature type="modified residue" description="N6-acetyllysine" evidence="12">
    <location>
        <position position="467"/>
    </location>
</feature>
<feature type="modified residue" description="N6-acetyllysine" evidence="12">
    <location>
        <position position="499"/>
    </location>
</feature>
<feature type="modified residue" description="N6-acetyllysine" evidence="12">
    <location>
        <position position="709"/>
    </location>
</feature>
<feature type="sequence conflict" description="In Ref. 4; AAH06660/AAH15300." evidence="9" ref="4">
    <original>V</original>
    <variation>A</variation>
    <location>
        <position position="491"/>
    </location>
</feature>
<feature type="strand" evidence="17">
    <location>
        <begin position="32"/>
        <end position="36"/>
    </location>
</feature>
<feature type="strand" evidence="17">
    <location>
        <begin position="39"/>
        <end position="43"/>
    </location>
</feature>
<feature type="helix" evidence="17">
    <location>
        <begin position="49"/>
        <end position="55"/>
    </location>
</feature>
<feature type="strand" evidence="13">
    <location>
        <begin position="67"/>
        <end position="69"/>
    </location>
</feature>
<feature type="strand" evidence="17">
    <location>
        <begin position="79"/>
        <end position="82"/>
    </location>
</feature>
<feature type="strand" evidence="13">
    <location>
        <begin position="86"/>
        <end position="90"/>
    </location>
</feature>
<feature type="turn" evidence="17">
    <location>
        <begin position="91"/>
        <end position="93"/>
    </location>
</feature>
<feature type="strand" evidence="17">
    <location>
        <begin position="101"/>
        <end position="103"/>
    </location>
</feature>
<feature type="helix" evidence="17">
    <location>
        <begin position="107"/>
        <end position="122"/>
    </location>
</feature>
<feature type="helix" evidence="17">
    <location>
        <begin position="128"/>
        <end position="130"/>
    </location>
</feature>
<feature type="turn" evidence="17">
    <location>
        <begin position="132"/>
        <end position="135"/>
    </location>
</feature>
<feature type="helix" evidence="17">
    <location>
        <begin position="138"/>
        <end position="146"/>
    </location>
</feature>
<feature type="strand" evidence="17">
    <location>
        <begin position="167"/>
        <end position="171"/>
    </location>
</feature>
<feature type="helix" evidence="17">
    <location>
        <begin position="173"/>
        <end position="175"/>
    </location>
</feature>
<feature type="helix" evidence="17">
    <location>
        <begin position="181"/>
        <end position="188"/>
    </location>
</feature>
<feature type="strand" evidence="17">
    <location>
        <begin position="196"/>
        <end position="199"/>
    </location>
</feature>
<feature type="helix" evidence="17">
    <location>
        <begin position="201"/>
        <end position="203"/>
    </location>
</feature>
<feature type="strand" evidence="17">
    <location>
        <begin position="205"/>
        <end position="207"/>
    </location>
</feature>
<feature type="strand" evidence="17">
    <location>
        <begin position="209"/>
        <end position="211"/>
    </location>
</feature>
<feature type="turn" evidence="17">
    <location>
        <begin position="217"/>
        <end position="220"/>
    </location>
</feature>
<feature type="helix" evidence="17">
    <location>
        <begin position="221"/>
        <end position="225"/>
    </location>
</feature>
<feature type="strand" evidence="14">
    <location>
        <begin position="226"/>
        <end position="228"/>
    </location>
</feature>
<feature type="strand" evidence="17">
    <location>
        <begin position="231"/>
        <end position="233"/>
    </location>
</feature>
<feature type="turn" evidence="17">
    <location>
        <begin position="234"/>
        <end position="238"/>
    </location>
</feature>
<feature type="turn" evidence="17">
    <location>
        <begin position="242"/>
        <end position="244"/>
    </location>
</feature>
<feature type="strand" evidence="17">
    <location>
        <begin position="246"/>
        <end position="251"/>
    </location>
</feature>
<feature type="strand" evidence="17">
    <location>
        <begin position="254"/>
        <end position="257"/>
    </location>
</feature>
<feature type="strand" evidence="17">
    <location>
        <begin position="260"/>
        <end position="266"/>
    </location>
</feature>
<feature type="strand" evidence="17">
    <location>
        <begin position="269"/>
        <end position="275"/>
    </location>
</feature>
<feature type="turn" evidence="17">
    <location>
        <begin position="279"/>
        <end position="282"/>
    </location>
</feature>
<feature type="helix" evidence="17">
    <location>
        <begin position="288"/>
        <end position="292"/>
    </location>
</feature>
<feature type="helix" evidence="17">
    <location>
        <begin position="293"/>
        <end position="298"/>
    </location>
</feature>
<feature type="strand" evidence="17">
    <location>
        <begin position="299"/>
        <end position="301"/>
    </location>
</feature>
<feature type="strand" evidence="17">
    <location>
        <begin position="306"/>
        <end position="308"/>
    </location>
</feature>
<feature type="strand" evidence="19">
    <location>
        <begin position="310"/>
        <end position="312"/>
    </location>
</feature>
<feature type="strand" evidence="17">
    <location>
        <begin position="314"/>
        <end position="316"/>
    </location>
</feature>
<feature type="helix" evidence="17">
    <location>
        <begin position="319"/>
        <end position="332"/>
    </location>
</feature>
<feature type="helix" evidence="17">
    <location>
        <begin position="335"/>
        <end position="337"/>
    </location>
</feature>
<feature type="strand" evidence="17">
    <location>
        <begin position="338"/>
        <end position="342"/>
    </location>
</feature>
<feature type="helix" evidence="17">
    <location>
        <begin position="348"/>
        <end position="360"/>
    </location>
</feature>
<feature type="strand" evidence="17">
    <location>
        <begin position="365"/>
        <end position="370"/>
    </location>
</feature>
<feature type="turn" evidence="17">
    <location>
        <begin position="376"/>
        <end position="379"/>
    </location>
</feature>
<feature type="helix" evidence="17">
    <location>
        <begin position="382"/>
        <end position="385"/>
    </location>
</feature>
<feature type="strand" evidence="19">
    <location>
        <begin position="386"/>
        <end position="389"/>
    </location>
</feature>
<feature type="helix" evidence="17">
    <location>
        <begin position="392"/>
        <end position="395"/>
    </location>
</feature>
<feature type="strand" evidence="17">
    <location>
        <begin position="398"/>
        <end position="404"/>
    </location>
</feature>
<feature type="helix" evidence="17">
    <location>
        <begin position="407"/>
        <end position="410"/>
    </location>
</feature>
<feature type="helix" evidence="17">
    <location>
        <begin position="412"/>
        <end position="424"/>
    </location>
</feature>
<feature type="strand" evidence="17">
    <location>
        <begin position="428"/>
        <end position="434"/>
    </location>
</feature>
<feature type="strand" evidence="17">
    <location>
        <begin position="443"/>
        <end position="448"/>
    </location>
</feature>
<feature type="helix" evidence="17">
    <location>
        <begin position="451"/>
        <end position="456"/>
    </location>
</feature>
<feature type="helix" evidence="17">
    <location>
        <begin position="463"/>
        <end position="468"/>
    </location>
</feature>
<feature type="strand" evidence="17">
    <location>
        <begin position="470"/>
        <end position="477"/>
    </location>
</feature>
<feature type="helix" evidence="17">
    <location>
        <begin position="480"/>
        <end position="482"/>
    </location>
</feature>
<feature type="strand" evidence="14">
    <location>
        <begin position="483"/>
        <end position="485"/>
    </location>
</feature>
<feature type="helix" evidence="17">
    <location>
        <begin position="486"/>
        <end position="504"/>
    </location>
</feature>
<feature type="strand" evidence="18">
    <location>
        <begin position="508"/>
        <end position="510"/>
    </location>
</feature>
<feature type="strand" evidence="17">
    <location>
        <begin position="513"/>
        <end position="516"/>
    </location>
</feature>
<feature type="helix" evidence="17">
    <location>
        <begin position="522"/>
        <end position="527"/>
    </location>
</feature>
<feature type="strand" evidence="17">
    <location>
        <begin position="531"/>
        <end position="534"/>
    </location>
</feature>
<feature type="helix" evidence="17">
    <location>
        <begin position="535"/>
        <end position="539"/>
    </location>
</feature>
<feature type="strand" evidence="17">
    <location>
        <begin position="543"/>
        <end position="549"/>
    </location>
</feature>
<feature type="strand" evidence="13">
    <location>
        <begin position="552"/>
        <end position="555"/>
    </location>
</feature>
<feature type="helix" evidence="17">
    <location>
        <begin position="557"/>
        <end position="559"/>
    </location>
</feature>
<feature type="strand" evidence="17">
    <location>
        <begin position="565"/>
        <end position="572"/>
    </location>
</feature>
<feature type="strand" evidence="17">
    <location>
        <begin position="574"/>
        <end position="576"/>
    </location>
</feature>
<feature type="helix" evidence="17">
    <location>
        <begin position="577"/>
        <end position="579"/>
    </location>
</feature>
<feature type="strand" evidence="17">
    <location>
        <begin position="581"/>
        <end position="586"/>
    </location>
</feature>
<feature type="helix" evidence="17">
    <location>
        <begin position="589"/>
        <end position="591"/>
    </location>
</feature>
<feature type="strand" evidence="17">
    <location>
        <begin position="595"/>
        <end position="597"/>
    </location>
</feature>
<feature type="strand" evidence="17">
    <location>
        <begin position="603"/>
        <end position="605"/>
    </location>
</feature>
<feature type="strand" evidence="16">
    <location>
        <begin position="613"/>
        <end position="615"/>
    </location>
</feature>
<feature type="helix" evidence="17">
    <location>
        <begin position="619"/>
        <end position="629"/>
    </location>
</feature>
<feature type="helix" evidence="17">
    <location>
        <begin position="639"/>
        <end position="649"/>
    </location>
</feature>
<feature type="helix" evidence="17">
    <location>
        <begin position="651"/>
        <end position="654"/>
    </location>
</feature>
<feature type="strand" evidence="15">
    <location>
        <begin position="655"/>
        <end position="657"/>
    </location>
</feature>
<feature type="helix" evidence="17">
    <location>
        <begin position="665"/>
        <end position="673"/>
    </location>
</feature>
<feature type="helix" evidence="17">
    <location>
        <begin position="691"/>
        <end position="693"/>
    </location>
</feature>
<feature type="helix" evidence="17">
    <location>
        <begin position="699"/>
        <end position="702"/>
    </location>
</feature>
<feature type="helix" evidence="17">
    <location>
        <begin position="705"/>
        <end position="713"/>
    </location>
</feature>
<dbReference type="EC" id="7.1.1.2" evidence="6 7"/>
<dbReference type="EMBL" id="AK034597">
    <property type="protein sequence ID" value="BAE20494.1"/>
    <property type="molecule type" value="mRNA"/>
</dbReference>
<dbReference type="EMBL" id="AK036926">
    <property type="protein sequence ID" value="BAC29641.1"/>
    <property type="molecule type" value="mRNA"/>
</dbReference>
<dbReference type="EMBL" id="AK142711">
    <property type="protein sequence ID" value="BAE25170.1"/>
    <property type="molecule type" value="mRNA"/>
</dbReference>
<dbReference type="EMBL" id="AL645950">
    <property type="status" value="NOT_ANNOTATED_CDS"/>
    <property type="molecule type" value="Genomic_DNA"/>
</dbReference>
<dbReference type="EMBL" id="CH466548">
    <property type="protein sequence ID" value="EDL00180.1"/>
    <property type="molecule type" value="Genomic_DNA"/>
</dbReference>
<dbReference type="EMBL" id="CH466548">
    <property type="protein sequence ID" value="EDL00181.1"/>
    <property type="molecule type" value="Genomic_DNA"/>
</dbReference>
<dbReference type="EMBL" id="CH466548">
    <property type="protein sequence ID" value="EDL00182.1"/>
    <property type="molecule type" value="Genomic_DNA"/>
</dbReference>
<dbReference type="EMBL" id="CH466548">
    <property type="protein sequence ID" value="EDL00184.1"/>
    <property type="molecule type" value="Genomic_DNA"/>
</dbReference>
<dbReference type="EMBL" id="BC006660">
    <property type="protein sequence ID" value="AAH06660.1"/>
    <property type="molecule type" value="mRNA"/>
</dbReference>
<dbReference type="EMBL" id="BC015300">
    <property type="protein sequence ID" value="AAH15300.1"/>
    <property type="molecule type" value="mRNA"/>
</dbReference>
<dbReference type="CCDS" id="CCDS14996.1"/>
<dbReference type="RefSeq" id="NP_001153510.1">
    <property type="nucleotide sequence ID" value="NM_001160038.1"/>
</dbReference>
<dbReference type="RefSeq" id="NP_001153511.1">
    <property type="nucleotide sequence ID" value="NM_001160039.1"/>
</dbReference>
<dbReference type="RefSeq" id="NP_001153512.1">
    <property type="nucleotide sequence ID" value="NM_001160040.1"/>
</dbReference>
<dbReference type="RefSeq" id="NP_663493.2">
    <property type="nucleotide sequence ID" value="NM_145518.2"/>
</dbReference>
<dbReference type="RefSeq" id="XP_006496015.1">
    <property type="nucleotide sequence ID" value="XM_006495952.4"/>
</dbReference>
<dbReference type="RefSeq" id="XP_030109554.1">
    <property type="nucleotide sequence ID" value="XM_030253694.2"/>
</dbReference>
<dbReference type="RefSeq" id="XP_036020306.1">
    <property type="nucleotide sequence ID" value="XM_036164413.1"/>
</dbReference>
<dbReference type="RefSeq" id="XP_036020310.1">
    <property type="nucleotide sequence ID" value="XM_036164417.1"/>
</dbReference>
<dbReference type="RefSeq" id="XP_036020314.1">
    <property type="nucleotide sequence ID" value="XM_036164421.1"/>
</dbReference>
<dbReference type="PDB" id="6G2J">
    <property type="method" value="EM"/>
    <property type="resolution" value="3.30 A"/>
    <property type="chains" value="G=1-727"/>
</dbReference>
<dbReference type="PDB" id="6G72">
    <property type="method" value="EM"/>
    <property type="resolution" value="3.90 A"/>
    <property type="chains" value="G=1-727"/>
</dbReference>
<dbReference type="PDB" id="6ZR2">
    <property type="method" value="EM"/>
    <property type="resolution" value="3.10 A"/>
    <property type="chains" value="G=1-727"/>
</dbReference>
<dbReference type="PDB" id="6ZTQ">
    <property type="method" value="EM"/>
    <property type="resolution" value="3.00 A"/>
    <property type="chains" value="G=1-727"/>
</dbReference>
<dbReference type="PDB" id="7AK5">
    <property type="method" value="EM"/>
    <property type="resolution" value="3.17 A"/>
    <property type="chains" value="G=1-715"/>
</dbReference>
<dbReference type="PDB" id="7AK6">
    <property type="method" value="EM"/>
    <property type="resolution" value="3.82 A"/>
    <property type="chains" value="G=1-727"/>
</dbReference>
<dbReference type="PDB" id="7B93">
    <property type="method" value="EM"/>
    <property type="resolution" value="3.04 A"/>
    <property type="chains" value="G=1-727"/>
</dbReference>
<dbReference type="PDB" id="7PSA">
    <property type="method" value="EM"/>
    <property type="resolution" value="3.40 A"/>
    <property type="chains" value="G=1-727"/>
</dbReference>
<dbReference type="PDB" id="8C2S">
    <property type="method" value="EM"/>
    <property type="resolution" value="3.90 A"/>
    <property type="chains" value="G=1-727"/>
</dbReference>
<dbReference type="PDB" id="8CA3">
    <property type="method" value="EM"/>
    <property type="resolution" value="3.20 A"/>
    <property type="chains" value="G=1-727"/>
</dbReference>
<dbReference type="PDB" id="8CA4">
    <property type="method" value="EM"/>
    <property type="resolution" value="3.25 A"/>
    <property type="chains" value="G=1-727"/>
</dbReference>
<dbReference type="PDB" id="8CA5">
    <property type="method" value="EM"/>
    <property type="resolution" value="3.90 A"/>
    <property type="chains" value="G=1-727"/>
</dbReference>
<dbReference type="PDB" id="8IAO">
    <property type="method" value="EM"/>
    <property type="resolution" value="4.20 A"/>
    <property type="chains" value="G=1-727"/>
</dbReference>
<dbReference type="PDB" id="8IAP">
    <property type="method" value="EM"/>
    <property type="resolution" value="3.20 A"/>
    <property type="chains" value="G=1-727"/>
</dbReference>
<dbReference type="PDB" id="8IB4">
    <property type="method" value="EM"/>
    <property type="resolution" value="4.30 A"/>
    <property type="chains" value="G=1-727"/>
</dbReference>
<dbReference type="PDB" id="8IB5">
    <property type="method" value="EM"/>
    <property type="resolution" value="3.30 A"/>
    <property type="chains" value="G=1-727"/>
</dbReference>
<dbReference type="PDB" id="8IB9">
    <property type="method" value="EM"/>
    <property type="resolution" value="4.30 A"/>
    <property type="chains" value="G=1-727"/>
</dbReference>
<dbReference type="PDB" id="8IBA">
    <property type="method" value="EM"/>
    <property type="resolution" value="3.20 A"/>
    <property type="chains" value="G=1-727"/>
</dbReference>
<dbReference type="PDB" id="8IBD">
    <property type="method" value="EM"/>
    <property type="resolution" value="4.20 A"/>
    <property type="chains" value="G=1-727"/>
</dbReference>
<dbReference type="PDB" id="8IBE">
    <property type="method" value="EM"/>
    <property type="resolution" value="3.30 A"/>
    <property type="chains" value="G=1-727"/>
</dbReference>
<dbReference type="PDB" id="8IC2">
    <property type="method" value="EM"/>
    <property type="resolution" value="6.30 A"/>
    <property type="chains" value="G=1-727"/>
</dbReference>
<dbReference type="PDB" id="8IC3">
    <property type="method" value="EM"/>
    <property type="resolution" value="3.20 A"/>
    <property type="chains" value="G=1-727"/>
</dbReference>
<dbReference type="PDB" id="8OLT">
    <property type="method" value="EM"/>
    <property type="resolution" value="2.84 A"/>
    <property type="chains" value="G=1-727"/>
</dbReference>
<dbReference type="PDB" id="8OM1">
    <property type="method" value="EM"/>
    <property type="resolution" value="2.39 A"/>
    <property type="chains" value="G=1-727"/>
</dbReference>
<dbReference type="PDB" id="8PW5">
    <property type="method" value="EM"/>
    <property type="resolution" value="3.60 A"/>
    <property type="chains" value="3=1-727"/>
</dbReference>
<dbReference type="PDB" id="8PW6">
    <property type="method" value="EM"/>
    <property type="resolution" value="3.30 A"/>
    <property type="chains" value="3=1-727"/>
</dbReference>
<dbReference type="PDB" id="8PW7">
    <property type="method" value="EM"/>
    <property type="resolution" value="3.50 A"/>
    <property type="chains" value="3=1-727"/>
</dbReference>
<dbReference type="PDB" id="8RGP">
    <property type="method" value="EM"/>
    <property type="resolution" value="3.00 A"/>
    <property type="chains" value="3=1-727"/>
</dbReference>
<dbReference type="PDB" id="8RGQ">
    <property type="method" value="EM"/>
    <property type="resolution" value="3.00 A"/>
    <property type="chains" value="3=1-727"/>
</dbReference>
<dbReference type="PDB" id="8RGR">
    <property type="method" value="EM"/>
    <property type="resolution" value="2.90 A"/>
    <property type="chains" value="3=1-727"/>
</dbReference>
<dbReference type="PDB" id="8RGT">
    <property type="method" value="EM"/>
    <property type="resolution" value="3.10 A"/>
    <property type="chains" value="3=1-727"/>
</dbReference>
<dbReference type="PDB" id="8UCA">
    <property type="method" value="EM"/>
    <property type="resolution" value="3.70 A"/>
    <property type="chains" value="S1/s1=1-716"/>
</dbReference>
<dbReference type="PDB" id="8XNL">
    <property type="method" value="EM"/>
    <property type="resolution" value="3.10 A"/>
    <property type="chains" value="G=1-727"/>
</dbReference>
<dbReference type="PDB" id="8XNM">
    <property type="method" value="EM"/>
    <property type="resolution" value="3.50 A"/>
    <property type="chains" value="G=1-727"/>
</dbReference>
<dbReference type="PDB" id="8XNN">
    <property type="method" value="EM"/>
    <property type="resolution" value="3.60 A"/>
    <property type="chains" value="G=1-727"/>
</dbReference>
<dbReference type="PDB" id="8XNO">
    <property type="method" value="EM"/>
    <property type="resolution" value="3.40 A"/>
    <property type="chains" value="G=1-727"/>
</dbReference>
<dbReference type="PDB" id="8XNP">
    <property type="method" value="EM"/>
    <property type="resolution" value="3.50 A"/>
    <property type="chains" value="G=1-727"/>
</dbReference>
<dbReference type="PDB" id="8XNQ">
    <property type="method" value="EM"/>
    <property type="resolution" value="3.70 A"/>
    <property type="chains" value="G=1-727"/>
</dbReference>
<dbReference type="PDB" id="8XNR">
    <property type="method" value="EM"/>
    <property type="resolution" value="3.30 A"/>
    <property type="chains" value="G=1-727"/>
</dbReference>
<dbReference type="PDB" id="8XNS">
    <property type="method" value="EM"/>
    <property type="resolution" value="3.50 A"/>
    <property type="chains" value="G=1-727"/>
</dbReference>
<dbReference type="PDB" id="8XNT">
    <property type="method" value="EM"/>
    <property type="resolution" value="4.10 A"/>
    <property type="chains" value="G=1-727"/>
</dbReference>
<dbReference type="PDB" id="8XNU">
    <property type="method" value="EM"/>
    <property type="resolution" value="3.60 A"/>
    <property type="chains" value="G=1-727"/>
</dbReference>
<dbReference type="PDB" id="8XNV">
    <property type="method" value="EM"/>
    <property type="resolution" value="3.30 A"/>
    <property type="chains" value="G=1-727"/>
</dbReference>
<dbReference type="PDB" id="8XNW">
    <property type="method" value="EM"/>
    <property type="resolution" value="3.60 A"/>
    <property type="chains" value="G=1-727"/>
</dbReference>
<dbReference type="PDB" id="8XNX">
    <property type="method" value="EM"/>
    <property type="resolution" value="3.50 A"/>
    <property type="chains" value="G=1-727"/>
</dbReference>
<dbReference type="PDB" id="8XNY">
    <property type="method" value="EM"/>
    <property type="resolution" value="4.10 A"/>
    <property type="chains" value="G=1-727"/>
</dbReference>
<dbReference type="PDB" id="8XNZ">
    <property type="method" value="EM"/>
    <property type="resolution" value="3.30 A"/>
    <property type="chains" value="G=1-727"/>
</dbReference>
<dbReference type="PDB" id="8XO0">
    <property type="method" value="EM"/>
    <property type="resolution" value="4.20 A"/>
    <property type="chains" value="G=1-727"/>
</dbReference>
<dbReference type="PDBsum" id="6G2J"/>
<dbReference type="PDBsum" id="6G72"/>
<dbReference type="PDBsum" id="6ZR2"/>
<dbReference type="PDBsum" id="6ZTQ"/>
<dbReference type="PDBsum" id="7AK5"/>
<dbReference type="PDBsum" id="7AK6"/>
<dbReference type="PDBsum" id="7B93"/>
<dbReference type="PDBsum" id="7PSA"/>
<dbReference type="PDBsum" id="8C2S"/>
<dbReference type="PDBsum" id="8CA3"/>
<dbReference type="PDBsum" id="8CA4"/>
<dbReference type="PDBsum" id="8CA5"/>
<dbReference type="PDBsum" id="8IAO"/>
<dbReference type="PDBsum" id="8IAP"/>
<dbReference type="PDBsum" id="8IB4"/>
<dbReference type="PDBsum" id="8IB5"/>
<dbReference type="PDBsum" id="8IB9"/>
<dbReference type="PDBsum" id="8IBA"/>
<dbReference type="PDBsum" id="8IBD"/>
<dbReference type="PDBsum" id="8IBE"/>
<dbReference type="PDBsum" id="8IC2"/>
<dbReference type="PDBsum" id="8IC3"/>
<dbReference type="PDBsum" id="8OLT"/>
<dbReference type="PDBsum" id="8OM1"/>
<dbReference type="PDBsum" id="8PW5"/>
<dbReference type="PDBsum" id="8PW6"/>
<dbReference type="PDBsum" id="8PW7"/>
<dbReference type="PDBsum" id="8RGP"/>
<dbReference type="PDBsum" id="8RGQ"/>
<dbReference type="PDBsum" id="8RGR"/>
<dbReference type="PDBsum" id="8RGT"/>
<dbReference type="PDBsum" id="8UCA"/>
<dbReference type="PDBsum" id="8XNL"/>
<dbReference type="PDBsum" id="8XNM"/>
<dbReference type="PDBsum" id="8XNN"/>
<dbReference type="PDBsum" id="8XNO"/>
<dbReference type="PDBsum" id="8XNP"/>
<dbReference type="PDBsum" id="8XNQ"/>
<dbReference type="PDBsum" id="8XNR"/>
<dbReference type="PDBsum" id="8XNS"/>
<dbReference type="PDBsum" id="8XNT"/>
<dbReference type="PDBsum" id="8XNU"/>
<dbReference type="PDBsum" id="8XNV"/>
<dbReference type="PDBsum" id="8XNW"/>
<dbReference type="PDBsum" id="8XNX"/>
<dbReference type="PDBsum" id="8XNY"/>
<dbReference type="PDBsum" id="8XNZ"/>
<dbReference type="PDBsum" id="8XO0"/>
<dbReference type="EMDB" id="EMD-11377"/>
<dbReference type="EMDB" id="EMD-11424"/>
<dbReference type="EMDB" id="EMD-11810"/>
<dbReference type="EMDB" id="EMD-11811"/>
<dbReference type="EMDB" id="EMD-12095"/>
<dbReference type="EMDB" id="EMD-13611"/>
<dbReference type="EMDB" id="EMD-16398"/>
<dbReference type="EMDB" id="EMD-16516"/>
<dbReference type="EMDB" id="EMD-16517"/>
<dbReference type="EMDB" id="EMD-16518"/>
<dbReference type="EMDB" id="EMD-16962"/>
<dbReference type="EMDB" id="EMD-16965"/>
<dbReference type="EMDB" id="EMD-17989"/>
<dbReference type="EMDB" id="EMD-17990"/>
<dbReference type="EMDB" id="EMD-17991"/>
<dbReference type="EMDB" id="EMD-19145"/>
<dbReference type="EMDB" id="EMD-19146"/>
<dbReference type="EMDB" id="EMD-19147"/>
<dbReference type="EMDB" id="EMD-19148"/>
<dbReference type="EMDB" id="EMD-35313"/>
<dbReference type="EMDB" id="EMD-35314"/>
<dbReference type="EMDB" id="EMD-35331"/>
<dbReference type="EMDB" id="EMD-35332"/>
<dbReference type="EMDB" id="EMD-35336"/>
<dbReference type="EMDB" id="EMD-35337"/>
<dbReference type="EMDB" id="EMD-35340"/>
<dbReference type="EMDB" id="EMD-35341"/>
<dbReference type="EMDB" id="EMD-35352"/>
<dbReference type="EMDB" id="EMD-35353"/>
<dbReference type="EMDB" id="EMD-38506"/>
<dbReference type="EMDB" id="EMD-38507"/>
<dbReference type="EMDB" id="EMD-38508"/>
<dbReference type="EMDB" id="EMD-38509"/>
<dbReference type="EMDB" id="EMD-38510"/>
<dbReference type="EMDB" id="EMD-38511"/>
<dbReference type="EMDB" id="EMD-38512"/>
<dbReference type="EMDB" id="EMD-38513"/>
<dbReference type="EMDB" id="EMD-38514"/>
<dbReference type="EMDB" id="EMD-38515"/>
<dbReference type="EMDB" id="EMD-38516"/>
<dbReference type="EMDB" id="EMD-38517"/>
<dbReference type="EMDB" id="EMD-38518"/>
<dbReference type="EMDB" id="EMD-38519"/>
<dbReference type="EMDB" id="EMD-38520"/>
<dbReference type="EMDB" id="EMD-38521"/>
<dbReference type="EMDB" id="EMD-42122"/>
<dbReference type="EMDB" id="EMD-4345"/>
<dbReference type="EMDB" id="EMD-4356"/>
<dbReference type="SMR" id="Q91VD9"/>
<dbReference type="BioGRID" id="230599">
    <property type="interactions" value="87"/>
</dbReference>
<dbReference type="ComplexPortal" id="CPX-266">
    <property type="entry name" value="Mitochondrial respiratory chain complex I"/>
</dbReference>
<dbReference type="CORUM" id="Q91VD9"/>
<dbReference type="FunCoup" id="Q91VD9">
    <property type="interactions" value="2010"/>
</dbReference>
<dbReference type="IntAct" id="Q91VD9">
    <property type="interactions" value="9"/>
</dbReference>
<dbReference type="MINT" id="Q91VD9"/>
<dbReference type="STRING" id="10090.ENSMUSP00000027111"/>
<dbReference type="GlyGen" id="Q91VD9">
    <property type="glycosylation" value="2 sites, 1 O-linked glycan (1 site)"/>
</dbReference>
<dbReference type="iPTMnet" id="Q91VD9"/>
<dbReference type="MetOSite" id="Q91VD9"/>
<dbReference type="PhosphoSitePlus" id="Q91VD9"/>
<dbReference type="SwissPalm" id="Q91VD9"/>
<dbReference type="REPRODUCTION-2DPAGE" id="IPI00308882"/>
<dbReference type="REPRODUCTION-2DPAGE" id="Q91VD9"/>
<dbReference type="jPOST" id="Q91VD9"/>
<dbReference type="PaxDb" id="10090-ENSMUSP00000027111"/>
<dbReference type="PeptideAtlas" id="Q91VD9"/>
<dbReference type="ProteomicsDB" id="252872"/>
<dbReference type="Pumba" id="Q91VD9"/>
<dbReference type="Antibodypedia" id="34175">
    <property type="antibodies" value="309 antibodies from 36 providers"/>
</dbReference>
<dbReference type="DNASU" id="227197"/>
<dbReference type="Ensembl" id="ENSMUST00000027111.15">
    <property type="protein sequence ID" value="ENSMUSP00000027111.9"/>
    <property type="gene ID" value="ENSMUSG00000025968.17"/>
</dbReference>
<dbReference type="Ensembl" id="ENSMUST00000168099.9">
    <property type="protein sequence ID" value="ENSMUSP00000126621.3"/>
    <property type="gene ID" value="ENSMUSG00000025968.17"/>
</dbReference>
<dbReference type="GeneID" id="227197"/>
<dbReference type="KEGG" id="mmu:227197"/>
<dbReference type="UCSC" id="uc007bfu.2">
    <property type="organism name" value="mouse"/>
</dbReference>
<dbReference type="AGR" id="MGI:2443241"/>
<dbReference type="CTD" id="4719"/>
<dbReference type="MGI" id="MGI:2443241">
    <property type="gene designation" value="Ndufs1"/>
</dbReference>
<dbReference type="VEuPathDB" id="HostDB:ENSMUSG00000025968"/>
<dbReference type="eggNOG" id="KOG2282">
    <property type="taxonomic scope" value="Eukaryota"/>
</dbReference>
<dbReference type="GeneTree" id="ENSGT00940000153514"/>
<dbReference type="HOGENOM" id="CLU_000422_11_6_1"/>
<dbReference type="InParanoid" id="Q91VD9"/>
<dbReference type="OMA" id="QAMAYGV"/>
<dbReference type="OrthoDB" id="10249365at2759"/>
<dbReference type="PhylomeDB" id="Q91VD9"/>
<dbReference type="TreeFam" id="TF105756"/>
<dbReference type="Reactome" id="R-MMU-611105">
    <property type="pathway name" value="Respiratory electron transport"/>
</dbReference>
<dbReference type="Reactome" id="R-MMU-6799198">
    <property type="pathway name" value="Complex I biogenesis"/>
</dbReference>
<dbReference type="Reactome" id="R-MMU-9837999">
    <property type="pathway name" value="Mitochondrial protein degradation"/>
</dbReference>
<dbReference type="BioGRID-ORCS" id="227197">
    <property type="hits" value="25 hits in 77 CRISPR screens"/>
</dbReference>
<dbReference type="CD-CODE" id="CE726F99">
    <property type="entry name" value="Postsynaptic density"/>
</dbReference>
<dbReference type="ChiTaRS" id="Ndufs1">
    <property type="organism name" value="mouse"/>
</dbReference>
<dbReference type="PRO" id="PR:Q91VD9"/>
<dbReference type="Proteomes" id="UP000000589">
    <property type="component" value="Chromosome 1"/>
</dbReference>
<dbReference type="RNAct" id="Q91VD9">
    <property type="molecule type" value="protein"/>
</dbReference>
<dbReference type="Bgee" id="ENSMUSG00000025968">
    <property type="expression patterns" value="Expressed in myocardium of ventricle and 292 other cell types or tissues"/>
</dbReference>
<dbReference type="ExpressionAtlas" id="Q91VD9">
    <property type="expression patterns" value="baseline and differential"/>
</dbReference>
<dbReference type="GO" id="GO:0005743">
    <property type="term" value="C:mitochondrial inner membrane"/>
    <property type="evidence" value="ECO:0000314"/>
    <property type="project" value="UniProtKB"/>
</dbReference>
<dbReference type="GO" id="GO:0005758">
    <property type="term" value="C:mitochondrial intermembrane space"/>
    <property type="evidence" value="ECO:0000250"/>
    <property type="project" value="UniProtKB"/>
</dbReference>
<dbReference type="GO" id="GO:0005739">
    <property type="term" value="C:mitochondrion"/>
    <property type="evidence" value="ECO:0000314"/>
    <property type="project" value="UniProtKB"/>
</dbReference>
<dbReference type="GO" id="GO:0043209">
    <property type="term" value="C:myelin sheath"/>
    <property type="evidence" value="ECO:0007005"/>
    <property type="project" value="UniProtKB"/>
</dbReference>
<dbReference type="GO" id="GO:0045271">
    <property type="term" value="C:respiratory chain complex I"/>
    <property type="evidence" value="ECO:0000314"/>
    <property type="project" value="UniProtKB"/>
</dbReference>
<dbReference type="GO" id="GO:0051537">
    <property type="term" value="F:2 iron, 2 sulfur cluster binding"/>
    <property type="evidence" value="ECO:0007669"/>
    <property type="project" value="UniProtKB-KW"/>
</dbReference>
<dbReference type="GO" id="GO:0051539">
    <property type="term" value="F:4 iron, 4 sulfur cluster binding"/>
    <property type="evidence" value="ECO:0007669"/>
    <property type="project" value="UniProtKB-KW"/>
</dbReference>
<dbReference type="GO" id="GO:0009055">
    <property type="term" value="F:electron transfer activity"/>
    <property type="evidence" value="ECO:0000315"/>
    <property type="project" value="UniProtKB"/>
</dbReference>
<dbReference type="GO" id="GO:0046872">
    <property type="term" value="F:metal ion binding"/>
    <property type="evidence" value="ECO:0007669"/>
    <property type="project" value="UniProtKB-KW"/>
</dbReference>
<dbReference type="GO" id="GO:0008137">
    <property type="term" value="F:NADH dehydrogenase (ubiquinone) activity"/>
    <property type="evidence" value="ECO:0000315"/>
    <property type="project" value="UniProtKB"/>
</dbReference>
<dbReference type="GO" id="GO:0009060">
    <property type="term" value="P:aerobic respiration"/>
    <property type="evidence" value="ECO:0000303"/>
    <property type="project" value="ComplexPortal"/>
</dbReference>
<dbReference type="GO" id="GO:0006120">
    <property type="term" value="P:mitochondrial electron transport, NADH to ubiquinone"/>
    <property type="evidence" value="ECO:0007669"/>
    <property type="project" value="Ensembl"/>
</dbReference>
<dbReference type="GO" id="GO:0032981">
    <property type="term" value="P:mitochondrial respiratory chain complex I assembly"/>
    <property type="evidence" value="ECO:0000315"/>
    <property type="project" value="UniProtKB"/>
</dbReference>
<dbReference type="GO" id="GO:0042776">
    <property type="term" value="P:proton motive force-driven mitochondrial ATP synthesis"/>
    <property type="evidence" value="ECO:0000303"/>
    <property type="project" value="ComplexPortal"/>
</dbReference>
<dbReference type="CDD" id="cd00207">
    <property type="entry name" value="fer2"/>
    <property type="match status" value="1"/>
</dbReference>
<dbReference type="CDD" id="cd02773">
    <property type="entry name" value="MopB_Res-Cmplx1_Nad11"/>
    <property type="match status" value="1"/>
</dbReference>
<dbReference type="FunFam" id="3.10.20.740:FF:000001">
    <property type="entry name" value="NADH-quinone oxidoreductase subunit G"/>
    <property type="match status" value="1"/>
</dbReference>
<dbReference type="FunFam" id="3.30.200.210:FF:000002">
    <property type="entry name" value="NADH-ubiquinone oxidoreductase 75 kDa subunit"/>
    <property type="match status" value="1"/>
</dbReference>
<dbReference type="FunFam" id="3.30.70.20:FF:000002">
    <property type="entry name" value="NADH-ubiquinone oxidoreductase 75 kDa subunit"/>
    <property type="match status" value="1"/>
</dbReference>
<dbReference type="FunFam" id="3.40.50.740:FF:000002">
    <property type="entry name" value="NADH-ubiquinone oxidoreductase 75 kDa subunit, mitochondrial"/>
    <property type="match status" value="1"/>
</dbReference>
<dbReference type="Gene3D" id="3.10.20.740">
    <property type="match status" value="1"/>
</dbReference>
<dbReference type="Gene3D" id="3.30.200.210">
    <property type="match status" value="1"/>
</dbReference>
<dbReference type="Gene3D" id="3.30.70.20">
    <property type="match status" value="1"/>
</dbReference>
<dbReference type="Gene3D" id="3.40.50.740">
    <property type="match status" value="1"/>
</dbReference>
<dbReference type="InterPro" id="IPR036010">
    <property type="entry name" value="2Fe-2S_ferredoxin-like_sf"/>
</dbReference>
<dbReference type="InterPro" id="IPR001041">
    <property type="entry name" value="2Fe-2S_ferredoxin-type"/>
</dbReference>
<dbReference type="InterPro" id="IPR006656">
    <property type="entry name" value="Mopterin_OxRdtase"/>
</dbReference>
<dbReference type="InterPro" id="IPR006963">
    <property type="entry name" value="Mopterin_OxRdtase_4Fe-4S_dom"/>
</dbReference>
<dbReference type="InterPro" id="IPR000283">
    <property type="entry name" value="NADH_UbQ_OxRdtase_75kDa_su_CS"/>
</dbReference>
<dbReference type="InterPro" id="IPR054351">
    <property type="entry name" value="NADH_UbQ_OxRdtase_ferredoxin"/>
</dbReference>
<dbReference type="InterPro" id="IPR010228">
    <property type="entry name" value="NADH_UbQ_OxRdtase_Gsu"/>
</dbReference>
<dbReference type="InterPro" id="IPR019574">
    <property type="entry name" value="NADH_UbQ_OxRdtase_Gsu_4Fe4S-bd"/>
</dbReference>
<dbReference type="InterPro" id="IPR015405">
    <property type="entry name" value="NDUFS1-like_C"/>
</dbReference>
<dbReference type="InterPro" id="IPR050123">
    <property type="entry name" value="Prok_molybdopt-oxidoreductase"/>
</dbReference>
<dbReference type="NCBIfam" id="TIGR01973">
    <property type="entry name" value="NuoG"/>
    <property type="match status" value="1"/>
</dbReference>
<dbReference type="PANTHER" id="PTHR43105:SF13">
    <property type="entry name" value="NADH-UBIQUINONE OXIDOREDUCTASE 75 KDA SUBUNIT, MITOCHONDRIAL"/>
    <property type="match status" value="1"/>
</dbReference>
<dbReference type="PANTHER" id="PTHR43105">
    <property type="entry name" value="RESPIRATORY NITRATE REDUCTASE"/>
    <property type="match status" value="1"/>
</dbReference>
<dbReference type="Pfam" id="PF13510">
    <property type="entry name" value="Fer2_4"/>
    <property type="match status" value="1"/>
</dbReference>
<dbReference type="Pfam" id="PF22151">
    <property type="entry name" value="Fer4_NDSU1"/>
    <property type="match status" value="1"/>
</dbReference>
<dbReference type="Pfam" id="PF22117">
    <property type="entry name" value="Fer4_Nqo3"/>
    <property type="match status" value="1"/>
</dbReference>
<dbReference type="Pfam" id="PF00384">
    <property type="entry name" value="Molybdopterin"/>
    <property type="match status" value="1"/>
</dbReference>
<dbReference type="Pfam" id="PF10588">
    <property type="entry name" value="NADH-G_4Fe-4S_3"/>
    <property type="match status" value="1"/>
</dbReference>
<dbReference type="Pfam" id="PF09326">
    <property type="entry name" value="NADH_dhqG_C"/>
    <property type="match status" value="1"/>
</dbReference>
<dbReference type="SMART" id="SM00929">
    <property type="entry name" value="NADH-G_4Fe-4S_3"/>
    <property type="match status" value="1"/>
</dbReference>
<dbReference type="SUPFAM" id="SSF54292">
    <property type="entry name" value="2Fe-2S ferredoxin-like"/>
    <property type="match status" value="1"/>
</dbReference>
<dbReference type="SUPFAM" id="SSF54862">
    <property type="entry name" value="4Fe-4S ferredoxins"/>
    <property type="match status" value="1"/>
</dbReference>
<dbReference type="SUPFAM" id="SSF53706">
    <property type="entry name" value="Formate dehydrogenase/DMSO reductase, domains 1-3"/>
    <property type="match status" value="1"/>
</dbReference>
<dbReference type="PROSITE" id="PS51085">
    <property type="entry name" value="2FE2S_FER_2"/>
    <property type="match status" value="1"/>
</dbReference>
<dbReference type="PROSITE" id="PS51839">
    <property type="entry name" value="4FE4S_HC3"/>
    <property type="match status" value="1"/>
</dbReference>
<dbReference type="PROSITE" id="PS51669">
    <property type="entry name" value="4FE4S_MOW_BIS_MGD"/>
    <property type="match status" value="1"/>
</dbReference>
<dbReference type="PROSITE" id="PS00641">
    <property type="entry name" value="COMPLEX1_75K_1"/>
    <property type="match status" value="1"/>
</dbReference>
<dbReference type="PROSITE" id="PS00642">
    <property type="entry name" value="COMPLEX1_75K_2"/>
    <property type="match status" value="1"/>
</dbReference>
<dbReference type="PROSITE" id="PS00643">
    <property type="entry name" value="COMPLEX1_75K_3"/>
    <property type="match status" value="1"/>
</dbReference>